<sequence>MGTATEKLSDATFKVADLSLAEWGRKEISVSEFEMPGLMAIRRKYAKEKPLAGVRITGSLHMTIQTAVLIETLVDLGASVRWASCNIFSTQDHAAAAIAKAGVPVFAWKGESLEEYWWCTLQAVTHPGGKGPQLVVDDGGDVTLLIHKGYELENGSDWVNTPSGSHEEKVIKDLLKQVHAEDPQRWHKMVAEWRGVSEETTTGVHRLYKMQEQGKLLVPAINVNDSVTKSKFDNLYGCRESLADGIKRATDVMVAGKVAVICGYGDVGKGSAHSLRGMGARVIVTEIDPINALQAAMEGFEVTTIEDTLGRGDIYVTCTGNCEIITLEHMRLMKDQAIVCNIGHFDNEIQMDRLNESDAKRLQIKPQVDMYTFPGGSSIFILAEGRLVNLGCATGHPSFVMSNSFANQTLAQLDLWKNKDTYKVGVYTLPKKLDEEVARLHLEKIGVKLTTLTPAQAEYLGVPVEGPYKPDHYRY</sequence>
<proteinExistence type="inferred from homology"/>
<protein>
    <recommendedName>
        <fullName evidence="1">Adenosylhomocysteinase</fullName>
        <ecNumber evidence="1">3.13.2.1</ecNumber>
    </recommendedName>
    <alternativeName>
        <fullName evidence="1">S-adenosyl-L-homocysteine hydrolase</fullName>
        <shortName evidence="1">AdoHcyase</shortName>
    </alternativeName>
</protein>
<accession>Q01VU1</accession>
<organism>
    <name type="scientific">Solibacter usitatus (strain Ellin6076)</name>
    <dbReference type="NCBI Taxonomy" id="234267"/>
    <lineage>
        <taxon>Bacteria</taxon>
        <taxon>Pseudomonadati</taxon>
        <taxon>Acidobacteriota</taxon>
        <taxon>Terriglobia</taxon>
        <taxon>Bryobacterales</taxon>
        <taxon>Solibacteraceae</taxon>
        <taxon>Candidatus Solibacter</taxon>
    </lineage>
</organism>
<dbReference type="EC" id="3.13.2.1" evidence="1"/>
<dbReference type="EMBL" id="CP000473">
    <property type="protein sequence ID" value="ABJ86224.1"/>
    <property type="molecule type" value="Genomic_DNA"/>
</dbReference>
<dbReference type="SMR" id="Q01VU1"/>
<dbReference type="STRING" id="234267.Acid_5273"/>
<dbReference type="KEGG" id="sus:Acid_5273"/>
<dbReference type="eggNOG" id="COG0499">
    <property type="taxonomic scope" value="Bacteria"/>
</dbReference>
<dbReference type="HOGENOM" id="CLU_025194_2_1_0"/>
<dbReference type="InParanoid" id="Q01VU1"/>
<dbReference type="OrthoDB" id="9802717at2"/>
<dbReference type="UniPathway" id="UPA00314">
    <property type="reaction ID" value="UER00076"/>
</dbReference>
<dbReference type="GO" id="GO:0005829">
    <property type="term" value="C:cytosol"/>
    <property type="evidence" value="ECO:0007669"/>
    <property type="project" value="TreeGrafter"/>
</dbReference>
<dbReference type="GO" id="GO:0004013">
    <property type="term" value="F:adenosylhomocysteinase activity"/>
    <property type="evidence" value="ECO:0007669"/>
    <property type="project" value="UniProtKB-UniRule"/>
</dbReference>
<dbReference type="GO" id="GO:0071269">
    <property type="term" value="P:L-homocysteine biosynthetic process"/>
    <property type="evidence" value="ECO:0007669"/>
    <property type="project" value="UniProtKB-UniRule"/>
</dbReference>
<dbReference type="GO" id="GO:0006730">
    <property type="term" value="P:one-carbon metabolic process"/>
    <property type="evidence" value="ECO:0007669"/>
    <property type="project" value="UniProtKB-KW"/>
</dbReference>
<dbReference type="GO" id="GO:0033353">
    <property type="term" value="P:S-adenosylmethionine cycle"/>
    <property type="evidence" value="ECO:0007669"/>
    <property type="project" value="TreeGrafter"/>
</dbReference>
<dbReference type="CDD" id="cd00401">
    <property type="entry name" value="SAHH"/>
    <property type="match status" value="1"/>
</dbReference>
<dbReference type="FunFam" id="3.40.50.720:FF:000004">
    <property type="entry name" value="Adenosylhomocysteinase"/>
    <property type="match status" value="1"/>
</dbReference>
<dbReference type="Gene3D" id="3.40.50.1480">
    <property type="entry name" value="Adenosylhomocysteinase-like"/>
    <property type="match status" value="1"/>
</dbReference>
<dbReference type="Gene3D" id="3.40.50.720">
    <property type="entry name" value="NAD(P)-binding Rossmann-like Domain"/>
    <property type="match status" value="1"/>
</dbReference>
<dbReference type="HAMAP" id="MF_00563">
    <property type="entry name" value="AdoHcyase"/>
    <property type="match status" value="1"/>
</dbReference>
<dbReference type="InterPro" id="IPR042172">
    <property type="entry name" value="Adenosylhomocyst_ase-like_sf"/>
</dbReference>
<dbReference type="InterPro" id="IPR000043">
    <property type="entry name" value="Adenosylhomocysteinase-like"/>
</dbReference>
<dbReference type="InterPro" id="IPR015878">
    <property type="entry name" value="Ado_hCys_hydrolase_NAD-bd"/>
</dbReference>
<dbReference type="InterPro" id="IPR036291">
    <property type="entry name" value="NAD(P)-bd_dom_sf"/>
</dbReference>
<dbReference type="InterPro" id="IPR020082">
    <property type="entry name" value="S-Ado-L-homoCys_hydrolase_CS"/>
</dbReference>
<dbReference type="NCBIfam" id="TIGR00936">
    <property type="entry name" value="ahcY"/>
    <property type="match status" value="1"/>
</dbReference>
<dbReference type="NCBIfam" id="NF004005">
    <property type="entry name" value="PRK05476.2-3"/>
    <property type="match status" value="1"/>
</dbReference>
<dbReference type="PANTHER" id="PTHR23420">
    <property type="entry name" value="ADENOSYLHOMOCYSTEINASE"/>
    <property type="match status" value="1"/>
</dbReference>
<dbReference type="PANTHER" id="PTHR23420:SF0">
    <property type="entry name" value="ADENOSYLHOMOCYSTEINASE"/>
    <property type="match status" value="1"/>
</dbReference>
<dbReference type="Pfam" id="PF05221">
    <property type="entry name" value="AdoHcyase"/>
    <property type="match status" value="1"/>
</dbReference>
<dbReference type="Pfam" id="PF00670">
    <property type="entry name" value="AdoHcyase_NAD"/>
    <property type="match status" value="1"/>
</dbReference>
<dbReference type="PIRSF" id="PIRSF001109">
    <property type="entry name" value="Ad_hcy_hydrolase"/>
    <property type="match status" value="1"/>
</dbReference>
<dbReference type="SMART" id="SM00996">
    <property type="entry name" value="AdoHcyase"/>
    <property type="match status" value="1"/>
</dbReference>
<dbReference type="SMART" id="SM00997">
    <property type="entry name" value="AdoHcyase_NAD"/>
    <property type="match status" value="1"/>
</dbReference>
<dbReference type="SUPFAM" id="SSF52283">
    <property type="entry name" value="Formate/glycerate dehydrogenase catalytic domain-like"/>
    <property type="match status" value="1"/>
</dbReference>
<dbReference type="SUPFAM" id="SSF51735">
    <property type="entry name" value="NAD(P)-binding Rossmann-fold domains"/>
    <property type="match status" value="1"/>
</dbReference>
<dbReference type="PROSITE" id="PS00738">
    <property type="entry name" value="ADOHCYASE_1"/>
    <property type="match status" value="1"/>
</dbReference>
<dbReference type="PROSITE" id="PS00739">
    <property type="entry name" value="ADOHCYASE_2"/>
    <property type="match status" value="1"/>
</dbReference>
<comment type="function">
    <text evidence="1">May play a key role in the regulation of the intracellular concentration of adenosylhomocysteine.</text>
</comment>
<comment type="catalytic activity">
    <reaction evidence="1">
        <text>S-adenosyl-L-homocysteine + H2O = L-homocysteine + adenosine</text>
        <dbReference type="Rhea" id="RHEA:21708"/>
        <dbReference type="ChEBI" id="CHEBI:15377"/>
        <dbReference type="ChEBI" id="CHEBI:16335"/>
        <dbReference type="ChEBI" id="CHEBI:57856"/>
        <dbReference type="ChEBI" id="CHEBI:58199"/>
        <dbReference type="EC" id="3.13.2.1"/>
    </reaction>
</comment>
<comment type="cofactor">
    <cofactor evidence="1">
        <name>NAD(+)</name>
        <dbReference type="ChEBI" id="CHEBI:57540"/>
    </cofactor>
    <text evidence="1">Binds 1 NAD(+) per subunit.</text>
</comment>
<comment type="pathway">
    <text evidence="1">Amino-acid biosynthesis; L-homocysteine biosynthesis; L-homocysteine from S-adenosyl-L-homocysteine: step 1/1.</text>
</comment>
<comment type="subcellular location">
    <subcellularLocation>
        <location evidence="1">Cytoplasm</location>
    </subcellularLocation>
</comment>
<comment type="similarity">
    <text evidence="1">Belongs to the adenosylhomocysteinase family.</text>
</comment>
<gene>
    <name evidence="1" type="primary">ahcY</name>
    <name type="ordered locus">Acid_5273</name>
</gene>
<evidence type="ECO:0000255" key="1">
    <source>
        <dbReference type="HAMAP-Rule" id="MF_00563"/>
    </source>
</evidence>
<keyword id="KW-0963">Cytoplasm</keyword>
<keyword id="KW-0378">Hydrolase</keyword>
<keyword id="KW-0520">NAD</keyword>
<keyword id="KW-0554">One-carbon metabolism</keyword>
<name>SAHH_SOLUE</name>
<reference key="1">
    <citation type="journal article" date="2009" name="Appl. Environ. Microbiol.">
        <title>Three genomes from the phylum Acidobacteria provide insight into the lifestyles of these microorganisms in soils.</title>
        <authorList>
            <person name="Ward N.L."/>
            <person name="Challacombe J.F."/>
            <person name="Janssen P.H."/>
            <person name="Henrissat B."/>
            <person name="Coutinho P.M."/>
            <person name="Wu M."/>
            <person name="Xie G."/>
            <person name="Haft D.H."/>
            <person name="Sait M."/>
            <person name="Badger J."/>
            <person name="Barabote R.D."/>
            <person name="Bradley B."/>
            <person name="Brettin T.S."/>
            <person name="Brinkac L.M."/>
            <person name="Bruce D."/>
            <person name="Creasy T."/>
            <person name="Daugherty S.C."/>
            <person name="Davidsen T.M."/>
            <person name="DeBoy R.T."/>
            <person name="Detter J.C."/>
            <person name="Dodson R.J."/>
            <person name="Durkin A.S."/>
            <person name="Ganapathy A."/>
            <person name="Gwinn-Giglio M."/>
            <person name="Han C.S."/>
            <person name="Khouri H."/>
            <person name="Kiss H."/>
            <person name="Kothari S.P."/>
            <person name="Madupu R."/>
            <person name="Nelson K.E."/>
            <person name="Nelson W.C."/>
            <person name="Paulsen I."/>
            <person name="Penn K."/>
            <person name="Ren Q."/>
            <person name="Rosovitz M.J."/>
            <person name="Selengut J.D."/>
            <person name="Shrivastava S."/>
            <person name="Sullivan S.A."/>
            <person name="Tapia R."/>
            <person name="Thompson L.S."/>
            <person name="Watkins K.L."/>
            <person name="Yang Q."/>
            <person name="Yu C."/>
            <person name="Zafar N."/>
            <person name="Zhou L."/>
            <person name="Kuske C.R."/>
        </authorList>
    </citation>
    <scope>NUCLEOTIDE SEQUENCE [LARGE SCALE GENOMIC DNA]</scope>
    <source>
        <strain>Ellin6076</strain>
    </source>
</reference>
<feature type="chain" id="PRO_1000024758" description="Adenosylhomocysteinase">
    <location>
        <begin position="1"/>
        <end position="475"/>
    </location>
</feature>
<feature type="binding site" evidence="1">
    <location>
        <position position="63"/>
    </location>
    <ligand>
        <name>substrate</name>
    </ligand>
</feature>
<feature type="binding site" evidence="1">
    <location>
        <position position="138"/>
    </location>
    <ligand>
        <name>substrate</name>
    </ligand>
</feature>
<feature type="binding site" evidence="1">
    <location>
        <position position="199"/>
    </location>
    <ligand>
        <name>substrate</name>
    </ligand>
</feature>
<feature type="binding site" evidence="1">
    <location>
        <begin position="200"/>
        <end position="202"/>
    </location>
    <ligand>
        <name>NAD(+)</name>
        <dbReference type="ChEBI" id="CHEBI:57540"/>
    </ligand>
</feature>
<feature type="binding site" evidence="1">
    <location>
        <position position="229"/>
    </location>
    <ligand>
        <name>substrate</name>
    </ligand>
</feature>
<feature type="binding site" evidence="1">
    <location>
        <position position="233"/>
    </location>
    <ligand>
        <name>substrate</name>
    </ligand>
</feature>
<feature type="binding site" evidence="1">
    <location>
        <position position="234"/>
    </location>
    <ligand>
        <name>NAD(+)</name>
        <dbReference type="ChEBI" id="CHEBI:57540"/>
    </ligand>
</feature>
<feature type="binding site" evidence="1">
    <location>
        <begin position="263"/>
        <end position="268"/>
    </location>
    <ligand>
        <name>NAD(+)</name>
        <dbReference type="ChEBI" id="CHEBI:57540"/>
    </ligand>
</feature>
<feature type="binding site" evidence="1">
    <location>
        <position position="286"/>
    </location>
    <ligand>
        <name>NAD(+)</name>
        <dbReference type="ChEBI" id="CHEBI:57540"/>
    </ligand>
</feature>
<feature type="binding site" evidence="1">
    <location>
        <position position="321"/>
    </location>
    <ligand>
        <name>NAD(+)</name>
        <dbReference type="ChEBI" id="CHEBI:57540"/>
    </ligand>
</feature>
<feature type="binding site" evidence="1">
    <location>
        <begin position="342"/>
        <end position="344"/>
    </location>
    <ligand>
        <name>NAD(+)</name>
        <dbReference type="ChEBI" id="CHEBI:57540"/>
    </ligand>
</feature>
<feature type="binding site" evidence="1">
    <location>
        <position position="389"/>
    </location>
    <ligand>
        <name>NAD(+)</name>
        <dbReference type="ChEBI" id="CHEBI:57540"/>
    </ligand>
</feature>